<evidence type="ECO:0000250" key="1"/>
<evidence type="ECO:0000305" key="2"/>
<gene>
    <name type="primary">fprA</name>
    <name type="ordered locus">MT3189</name>
</gene>
<keyword id="KW-0274">FAD</keyword>
<keyword id="KW-0285">Flavoprotein</keyword>
<keyword id="KW-0521">NADP</keyword>
<keyword id="KW-0560">Oxidoreductase</keyword>
<keyword id="KW-1185">Reference proteome</keyword>
<feature type="chain" id="PRO_0000427965" description="NADPH-ferredoxin reductase FprA">
    <location>
        <begin position="1"/>
        <end position="456"/>
    </location>
</feature>
<feature type="binding site" evidence="1">
    <location>
        <position position="14"/>
    </location>
    <ligand>
        <name>FAD</name>
        <dbReference type="ChEBI" id="CHEBI:57692"/>
    </ligand>
</feature>
<feature type="binding site" evidence="1">
    <location>
        <position position="40"/>
    </location>
    <ligand>
        <name>FAD</name>
        <dbReference type="ChEBI" id="CHEBI:57692"/>
    </ligand>
</feature>
<feature type="binding site" evidence="1">
    <location>
        <position position="48"/>
    </location>
    <ligand>
        <name>FAD</name>
        <dbReference type="ChEBI" id="CHEBI:57692"/>
    </ligand>
</feature>
<feature type="binding site" evidence="1">
    <location>
        <position position="84"/>
    </location>
    <ligand>
        <name>FAD</name>
        <dbReference type="ChEBI" id="CHEBI:57692"/>
    </ligand>
</feature>
<feature type="binding site" evidence="1">
    <location>
        <position position="110"/>
    </location>
    <ligand>
        <name>NADP(+)</name>
        <dbReference type="ChEBI" id="CHEBI:58349"/>
    </ligand>
</feature>
<feature type="binding site" evidence="1">
    <location>
        <begin position="155"/>
        <end position="158"/>
    </location>
    <ligand>
        <name>NADP(+)</name>
        <dbReference type="ChEBI" id="CHEBI:58349"/>
    </ligand>
</feature>
<feature type="binding site" evidence="1">
    <location>
        <begin position="199"/>
        <end position="200"/>
    </location>
    <ligand>
        <name>NADP(+)</name>
        <dbReference type="ChEBI" id="CHEBI:58349"/>
    </ligand>
</feature>
<feature type="binding site" evidence="1">
    <location>
        <position position="211"/>
    </location>
    <ligand>
        <name>NADP(+)</name>
        <dbReference type="ChEBI" id="CHEBI:58349"/>
    </ligand>
</feature>
<feature type="binding site" evidence="1">
    <location>
        <position position="359"/>
    </location>
    <ligand>
        <name>FAD</name>
        <dbReference type="ChEBI" id="CHEBI:57692"/>
    </ligand>
</feature>
<feature type="binding site" evidence="1">
    <location>
        <begin position="366"/>
        <end position="368"/>
    </location>
    <ligand>
        <name>FAD</name>
        <dbReference type="ChEBI" id="CHEBI:57692"/>
    </ligand>
</feature>
<feature type="binding site" evidence="1">
    <location>
        <position position="366"/>
    </location>
    <ligand>
        <name>NADP(+)</name>
        <dbReference type="ChEBI" id="CHEBI:58349"/>
    </ligand>
</feature>
<dbReference type="EC" id="1.18.1.2"/>
<dbReference type="EMBL" id="AE000516">
    <property type="protein sequence ID" value="AAK47528.1"/>
    <property type="molecule type" value="Genomic_DNA"/>
</dbReference>
<dbReference type="PIR" id="A70920">
    <property type="entry name" value="A70920"/>
</dbReference>
<dbReference type="RefSeq" id="WP_003900632.1">
    <property type="nucleotide sequence ID" value="NZ_KK341227.1"/>
</dbReference>
<dbReference type="SMR" id="P9WIQ2"/>
<dbReference type="KEGG" id="mtc:MT3189"/>
<dbReference type="PATRIC" id="fig|83331.31.peg.3439"/>
<dbReference type="HOGENOM" id="CLU_024722_3_0_11"/>
<dbReference type="Proteomes" id="UP000001020">
    <property type="component" value="Chromosome"/>
</dbReference>
<dbReference type="GO" id="GO:0004324">
    <property type="term" value="F:ferredoxin-NADP+ reductase activity"/>
    <property type="evidence" value="ECO:0007669"/>
    <property type="project" value="UniProtKB-EC"/>
</dbReference>
<dbReference type="Gene3D" id="3.50.50.60">
    <property type="entry name" value="FAD/NAD(P)-binding domain"/>
    <property type="match status" value="1"/>
</dbReference>
<dbReference type="Gene3D" id="3.40.50.720">
    <property type="entry name" value="NAD(P)-binding Rossmann-like Domain"/>
    <property type="match status" value="1"/>
</dbReference>
<dbReference type="InterPro" id="IPR036188">
    <property type="entry name" value="FAD/NAD-bd_sf"/>
</dbReference>
<dbReference type="InterPro" id="IPR023753">
    <property type="entry name" value="FAD/NAD-binding_dom"/>
</dbReference>
<dbReference type="InterPro" id="IPR055275">
    <property type="entry name" value="Ferredox_Rdtase"/>
</dbReference>
<dbReference type="InterPro" id="IPR021163">
    <property type="entry name" value="Ferredox_Rdtase_adrenod"/>
</dbReference>
<dbReference type="PANTHER" id="PTHR48467">
    <property type="entry name" value="GLUTAMATE SYNTHASE 1 [NADH], CHLOROPLASTIC-LIKE"/>
    <property type="match status" value="1"/>
</dbReference>
<dbReference type="PANTHER" id="PTHR48467:SF1">
    <property type="entry name" value="GLUTAMATE SYNTHASE 1 [NADH], CHLOROPLASTIC-LIKE"/>
    <property type="match status" value="1"/>
</dbReference>
<dbReference type="Pfam" id="PF07992">
    <property type="entry name" value="Pyr_redox_2"/>
    <property type="match status" value="1"/>
</dbReference>
<dbReference type="PIRSF" id="PIRSF000362">
    <property type="entry name" value="FNR"/>
    <property type="match status" value="1"/>
</dbReference>
<dbReference type="PRINTS" id="PR00419">
    <property type="entry name" value="ADXRDTASE"/>
</dbReference>
<dbReference type="SUPFAM" id="SSF51971">
    <property type="entry name" value="Nucleotide-binding domain"/>
    <property type="match status" value="2"/>
</dbReference>
<sequence>MRPYYIAIVGSGPSAFFAAASLLKAADTTEDLDMAVDMLEMLPTPWGLVRSGVAPDHPKIKSISKQFEKTAEDPRFRFFGNVVVGEHVQPGELSERYDAVIYAVGAQSDRMLNIPGEDLPGSIAAVDFVGWYNAHPHFEQVSPDLSGARAVVIGNGNVALDVARILLTDPDVLARTDIADHALESLRPRGIQEVVIVGRRGPLQAAFTTLELRELADLDGVDVVIDPAELDGITDEDAAAVGKVCKQNIKVLRGYADREPRPGHRRMVFRFLTSPIEIKGKRKVERIVLGRNELVSDGSGRVAAKDTGEREELPAQLVVRSVGYRGVPTPGLPFDDQSGTIPNVGGRINGSPNEYVVGWIKRGPTGVIGTNKKDAQDTVDTLIKNLGNAKEGAECKSFPEDHADQVADWLAARQPKLVTSAHWQVIDAFERAAGEPHGRPRVKLASLAELLRIGLG</sequence>
<protein>
    <recommendedName>
        <fullName>NADPH-ferredoxin reductase FprA</fullName>
        <shortName>NFR</shortName>
        <ecNumber>1.18.1.2</ecNumber>
    </recommendedName>
</protein>
<name>FPRA_MYCTO</name>
<comment type="function">
    <text evidence="1">May serve as electron transfer protein and supply electrons to P450 systems.</text>
</comment>
<comment type="catalytic activity">
    <reaction>
        <text>2 reduced [2Fe-2S]-[ferredoxin] + NADP(+) + H(+) = 2 oxidized [2Fe-2S]-[ferredoxin] + NADPH</text>
        <dbReference type="Rhea" id="RHEA:20125"/>
        <dbReference type="Rhea" id="RHEA-COMP:10000"/>
        <dbReference type="Rhea" id="RHEA-COMP:10001"/>
        <dbReference type="ChEBI" id="CHEBI:15378"/>
        <dbReference type="ChEBI" id="CHEBI:33737"/>
        <dbReference type="ChEBI" id="CHEBI:33738"/>
        <dbReference type="ChEBI" id="CHEBI:57783"/>
        <dbReference type="ChEBI" id="CHEBI:58349"/>
        <dbReference type="EC" id="1.18.1.2"/>
    </reaction>
</comment>
<comment type="cofactor">
    <cofactor evidence="1">
        <name>FAD</name>
        <dbReference type="ChEBI" id="CHEBI:57692"/>
    </cofactor>
</comment>
<comment type="subunit">
    <text evidence="1">Monomer.</text>
</comment>
<comment type="similarity">
    <text evidence="2">Belongs to the ferredoxin--NADP reductase type 1 family.</text>
</comment>
<reference key="1">
    <citation type="journal article" date="2002" name="J. Bacteriol.">
        <title>Whole-genome comparison of Mycobacterium tuberculosis clinical and laboratory strains.</title>
        <authorList>
            <person name="Fleischmann R.D."/>
            <person name="Alland D."/>
            <person name="Eisen J.A."/>
            <person name="Carpenter L."/>
            <person name="White O."/>
            <person name="Peterson J.D."/>
            <person name="DeBoy R.T."/>
            <person name="Dodson R.J."/>
            <person name="Gwinn M.L."/>
            <person name="Haft D.H."/>
            <person name="Hickey E.K."/>
            <person name="Kolonay J.F."/>
            <person name="Nelson W.C."/>
            <person name="Umayam L.A."/>
            <person name="Ermolaeva M.D."/>
            <person name="Salzberg S.L."/>
            <person name="Delcher A."/>
            <person name="Utterback T.R."/>
            <person name="Weidman J.F."/>
            <person name="Khouri H.M."/>
            <person name="Gill J."/>
            <person name="Mikula A."/>
            <person name="Bishai W."/>
            <person name="Jacobs W.R. Jr."/>
            <person name="Venter J.C."/>
            <person name="Fraser C.M."/>
        </authorList>
    </citation>
    <scope>NUCLEOTIDE SEQUENCE [LARGE SCALE GENOMIC DNA]</scope>
    <source>
        <strain>CDC 1551 / Oshkosh</strain>
    </source>
</reference>
<proteinExistence type="inferred from homology"/>
<accession>P9WIQ2</accession>
<accession>L0TBK5</accession>
<accession>O05783</accession>
<organism>
    <name type="scientific">Mycobacterium tuberculosis (strain CDC 1551 / Oshkosh)</name>
    <dbReference type="NCBI Taxonomy" id="83331"/>
    <lineage>
        <taxon>Bacteria</taxon>
        <taxon>Bacillati</taxon>
        <taxon>Actinomycetota</taxon>
        <taxon>Actinomycetes</taxon>
        <taxon>Mycobacteriales</taxon>
        <taxon>Mycobacteriaceae</taxon>
        <taxon>Mycobacterium</taxon>
        <taxon>Mycobacterium tuberculosis complex</taxon>
    </lineage>
</organism>